<accession>C3NGA0</accession>
<evidence type="ECO:0000255" key="1">
    <source>
        <dbReference type="HAMAP-Rule" id="MF_00273"/>
    </source>
</evidence>
<evidence type="ECO:0000305" key="2"/>
<proteinExistence type="inferred from homology"/>
<reference key="1">
    <citation type="journal article" date="2009" name="Proc. Natl. Acad. Sci. U.S.A.">
        <title>Biogeography of the Sulfolobus islandicus pan-genome.</title>
        <authorList>
            <person name="Reno M.L."/>
            <person name="Held N.L."/>
            <person name="Fields C.J."/>
            <person name="Burke P.V."/>
            <person name="Whitaker R.J."/>
        </authorList>
    </citation>
    <scope>NUCLEOTIDE SEQUENCE [LARGE SCALE GENOMIC DNA]</scope>
    <source>
        <strain>Y.N.15.51 / Yellowstone #2</strain>
    </source>
</reference>
<comment type="subunit">
    <text evidence="1">Part of the 50S ribosomal subunit. Binds 23S rRNA.</text>
</comment>
<comment type="similarity">
    <text evidence="1">Belongs to the eukaryotic ribosomal protein eL20 family.</text>
</comment>
<dbReference type="EMBL" id="CP001404">
    <property type="protein sequence ID" value="ACP48160.1"/>
    <property type="molecule type" value="Genomic_DNA"/>
</dbReference>
<dbReference type="RefSeq" id="WP_012711732.1">
    <property type="nucleotide sequence ID" value="NC_012623.1"/>
</dbReference>
<dbReference type="SMR" id="C3NGA0"/>
<dbReference type="GeneID" id="84062107"/>
<dbReference type="KEGG" id="sin:YN1551_1053"/>
<dbReference type="HOGENOM" id="CLU_177460_0_0_2"/>
<dbReference type="Proteomes" id="UP000006818">
    <property type="component" value="Chromosome"/>
</dbReference>
<dbReference type="GO" id="GO:1990904">
    <property type="term" value="C:ribonucleoprotein complex"/>
    <property type="evidence" value="ECO:0007669"/>
    <property type="project" value="UniProtKB-KW"/>
</dbReference>
<dbReference type="GO" id="GO:0005840">
    <property type="term" value="C:ribosome"/>
    <property type="evidence" value="ECO:0007669"/>
    <property type="project" value="UniProtKB-KW"/>
</dbReference>
<dbReference type="GO" id="GO:0070180">
    <property type="term" value="F:large ribosomal subunit rRNA binding"/>
    <property type="evidence" value="ECO:0007669"/>
    <property type="project" value="UniProtKB-UniRule"/>
</dbReference>
<dbReference type="GO" id="GO:0003735">
    <property type="term" value="F:structural constituent of ribosome"/>
    <property type="evidence" value="ECO:0007669"/>
    <property type="project" value="InterPro"/>
</dbReference>
<dbReference type="GO" id="GO:0006412">
    <property type="term" value="P:translation"/>
    <property type="evidence" value="ECO:0007669"/>
    <property type="project" value="UniProtKB-UniRule"/>
</dbReference>
<dbReference type="Gene3D" id="3.10.20.10">
    <property type="match status" value="1"/>
</dbReference>
<dbReference type="HAMAP" id="MF_00273">
    <property type="entry name" value="Ribosomal_eL20"/>
    <property type="match status" value="1"/>
</dbReference>
<dbReference type="InterPro" id="IPR028877">
    <property type="entry name" value="Ribosomal_eL20"/>
</dbReference>
<dbReference type="InterPro" id="IPR023573">
    <property type="entry name" value="Ribosomal_eL20_dom"/>
</dbReference>
<dbReference type="NCBIfam" id="NF001981">
    <property type="entry name" value="PRK00773.1-1"/>
    <property type="match status" value="1"/>
</dbReference>
<dbReference type="Pfam" id="PF01775">
    <property type="entry name" value="Ribosomal_L18A"/>
    <property type="match status" value="1"/>
</dbReference>
<dbReference type="SUPFAM" id="SSF160374">
    <property type="entry name" value="RplX-like"/>
    <property type="match status" value="1"/>
</dbReference>
<organism>
    <name type="scientific">Saccharolobus islandicus (strain Y.N.15.51 / Yellowstone #2)</name>
    <name type="common">Sulfolobus islandicus</name>
    <dbReference type="NCBI Taxonomy" id="419942"/>
    <lineage>
        <taxon>Archaea</taxon>
        <taxon>Thermoproteota</taxon>
        <taxon>Thermoprotei</taxon>
        <taxon>Sulfolobales</taxon>
        <taxon>Sulfolobaceae</taxon>
        <taxon>Saccharolobus</taxon>
    </lineage>
</organism>
<sequence>MSEIKFYLVKGSALFGESHYPEKRKFVKIVRALNEKQAIEYIYSYFGSKNKIKRYNIKIEQISEIKEEEIPDRRIRELAKIDKIIM</sequence>
<feature type="chain" id="PRO_1000204759" description="Large ribosomal subunit protein eL20">
    <location>
        <begin position="1"/>
        <end position="86"/>
    </location>
</feature>
<gene>
    <name evidence="1" type="primary">rpl18a</name>
    <name evidence="1" type="synonym">rpl20e</name>
    <name evidence="1" type="synonym">rplX</name>
    <name type="ordered locus">YN1551_1053</name>
</gene>
<protein>
    <recommendedName>
        <fullName evidence="1">Large ribosomal subunit protein eL20</fullName>
    </recommendedName>
    <alternativeName>
        <fullName evidence="2">50S ribosomal protein L18Ae</fullName>
    </alternativeName>
    <alternativeName>
        <fullName evidence="1">50S ribosomal protein L20e</fullName>
    </alternativeName>
    <alternativeName>
        <fullName evidence="1">50S ribosomal protein LX</fullName>
    </alternativeName>
</protein>
<name>RL18A_SACI1</name>
<keyword id="KW-0687">Ribonucleoprotein</keyword>
<keyword id="KW-0689">Ribosomal protein</keyword>
<keyword id="KW-0694">RNA-binding</keyword>
<keyword id="KW-0699">rRNA-binding</keyword>